<sequence length="113" mass="12293">MEIIMIFVSGILTAISVYLVLSKSLIRIVMGTTLLTHAANLFLITMGGLKHGTVPIYEANVKSYVDPIPQALILTAIVIAFATTAFFLVLAFRTYKELGTDNVESMKGVPEDD</sequence>
<organism>
    <name type="scientific">Staphylococcus aureus (strain Mu50 / ATCC 700699)</name>
    <dbReference type="NCBI Taxonomy" id="158878"/>
    <lineage>
        <taxon>Bacteria</taxon>
        <taxon>Bacillati</taxon>
        <taxon>Bacillota</taxon>
        <taxon>Bacilli</taxon>
        <taxon>Bacillales</taxon>
        <taxon>Staphylococcaceae</taxon>
        <taxon>Staphylococcus</taxon>
    </lineage>
</organism>
<name>MNHC1_STAAM</name>
<reference key="1">
    <citation type="journal article" date="2001" name="Lancet">
        <title>Whole genome sequencing of meticillin-resistant Staphylococcus aureus.</title>
        <authorList>
            <person name="Kuroda M."/>
            <person name="Ohta T."/>
            <person name="Uchiyama I."/>
            <person name="Baba T."/>
            <person name="Yuzawa H."/>
            <person name="Kobayashi I."/>
            <person name="Cui L."/>
            <person name="Oguchi A."/>
            <person name="Aoki K."/>
            <person name="Nagai Y."/>
            <person name="Lian J.-Q."/>
            <person name="Ito T."/>
            <person name="Kanamori M."/>
            <person name="Matsumaru H."/>
            <person name="Maruyama A."/>
            <person name="Murakami H."/>
            <person name="Hosoyama A."/>
            <person name="Mizutani-Ui Y."/>
            <person name="Takahashi N.K."/>
            <person name="Sawano T."/>
            <person name="Inoue R."/>
            <person name="Kaito C."/>
            <person name="Sekimizu K."/>
            <person name="Hirakawa H."/>
            <person name="Kuhara S."/>
            <person name="Goto S."/>
            <person name="Yabuzaki J."/>
            <person name="Kanehisa M."/>
            <person name="Yamashita A."/>
            <person name="Oshima K."/>
            <person name="Furuya K."/>
            <person name="Yoshino C."/>
            <person name="Shiba T."/>
            <person name="Hattori M."/>
            <person name="Ogasawara N."/>
            <person name="Hayashi H."/>
            <person name="Hiramatsu K."/>
        </authorList>
    </citation>
    <scope>NUCLEOTIDE SEQUENCE [LARGE SCALE GENOMIC DNA]</scope>
    <source>
        <strain>Mu50 / ATCC 700699</strain>
    </source>
</reference>
<proteinExistence type="inferred from homology"/>
<keyword id="KW-0050">Antiport</keyword>
<keyword id="KW-1003">Cell membrane</keyword>
<keyword id="KW-0375">Hydrogen ion transport</keyword>
<keyword id="KW-0406">Ion transport</keyword>
<keyword id="KW-0472">Membrane</keyword>
<keyword id="KW-0915">Sodium</keyword>
<keyword id="KW-0739">Sodium transport</keyword>
<keyword id="KW-0812">Transmembrane</keyword>
<keyword id="KW-1133">Transmembrane helix</keyword>
<keyword id="KW-0813">Transport</keyword>
<accession>P60680</accession>
<accession>Q9ZNG4</accession>
<feature type="chain" id="PRO_0000089148" description="Na(+)/H(+) antiporter subunit C1">
    <location>
        <begin position="1"/>
        <end position="113"/>
    </location>
</feature>
<feature type="transmembrane region" description="Helical" evidence="2">
    <location>
        <begin position="4"/>
        <end position="21"/>
    </location>
</feature>
<feature type="transmembrane region" description="Helical" evidence="2">
    <location>
        <begin position="26"/>
        <end position="48"/>
    </location>
</feature>
<feature type="transmembrane region" description="Helical" evidence="2">
    <location>
        <begin position="68"/>
        <end position="90"/>
    </location>
</feature>
<comment type="function">
    <text evidence="1">Mnh complex is a Na(+)/H(+) antiporter involved in Na(+) excretion.</text>
</comment>
<comment type="subunit">
    <text evidence="1">May form a heterooligomeric complex that consists of seven subunits: mnhA1, mnhB1, mnhC1, mnhD1, mnhE1, mnhF1 and mnhG1.</text>
</comment>
<comment type="subcellular location">
    <subcellularLocation>
        <location evidence="3">Cell membrane</location>
        <topology evidence="3">Multi-pass membrane protein</topology>
    </subcellularLocation>
</comment>
<comment type="similarity">
    <text evidence="3">Belongs to the CPA3 antiporters (TC 2.A.63) subunit C family.</text>
</comment>
<protein>
    <recommendedName>
        <fullName>Na(+)/H(+) antiporter subunit C1</fullName>
    </recommendedName>
    <alternativeName>
        <fullName>Mnh complex subunit C1</fullName>
    </alternativeName>
</protein>
<dbReference type="EMBL" id="BA000017">
    <property type="protein sequence ID" value="BAB57112.1"/>
    <property type="molecule type" value="Genomic_DNA"/>
</dbReference>
<dbReference type="RefSeq" id="WP_000402803.1">
    <property type="nucleotide sequence ID" value="NC_002758.2"/>
</dbReference>
<dbReference type="SMR" id="P60680"/>
<dbReference type="GeneID" id="98345271"/>
<dbReference type="KEGG" id="sav:SAV0950"/>
<dbReference type="HOGENOM" id="CLU_082058_3_1_9"/>
<dbReference type="PhylomeDB" id="P60680"/>
<dbReference type="Proteomes" id="UP000002481">
    <property type="component" value="Chromosome"/>
</dbReference>
<dbReference type="GO" id="GO:0005886">
    <property type="term" value="C:plasma membrane"/>
    <property type="evidence" value="ECO:0007669"/>
    <property type="project" value="UniProtKB-SubCell"/>
</dbReference>
<dbReference type="GO" id="GO:0015297">
    <property type="term" value="F:antiporter activity"/>
    <property type="evidence" value="ECO:0007669"/>
    <property type="project" value="UniProtKB-KW"/>
</dbReference>
<dbReference type="GO" id="GO:0008324">
    <property type="term" value="F:monoatomic cation transmembrane transporter activity"/>
    <property type="evidence" value="ECO:0007669"/>
    <property type="project" value="InterPro"/>
</dbReference>
<dbReference type="GO" id="GO:1902600">
    <property type="term" value="P:proton transmembrane transport"/>
    <property type="evidence" value="ECO:0007669"/>
    <property type="project" value="UniProtKB-KW"/>
</dbReference>
<dbReference type="GO" id="GO:0006814">
    <property type="term" value="P:sodium ion transport"/>
    <property type="evidence" value="ECO:0007669"/>
    <property type="project" value="UniProtKB-KW"/>
</dbReference>
<dbReference type="Gene3D" id="1.10.287.3510">
    <property type="match status" value="1"/>
</dbReference>
<dbReference type="InterPro" id="IPR050601">
    <property type="entry name" value="CPA3_antiporter_subunitC"/>
</dbReference>
<dbReference type="InterPro" id="IPR006673">
    <property type="entry name" value="Mnh_C1_su"/>
</dbReference>
<dbReference type="InterPro" id="IPR039428">
    <property type="entry name" value="NUOK/Mnh_C1-like"/>
</dbReference>
<dbReference type="NCBIfam" id="TIGR00941">
    <property type="entry name" value="2a6301s03"/>
    <property type="match status" value="1"/>
</dbReference>
<dbReference type="NCBIfam" id="NF006372">
    <property type="entry name" value="PRK08600.1"/>
    <property type="match status" value="1"/>
</dbReference>
<dbReference type="NCBIfam" id="NF006573">
    <property type="entry name" value="PRK09094.1"/>
    <property type="match status" value="1"/>
</dbReference>
<dbReference type="NCBIfam" id="NF009303">
    <property type="entry name" value="PRK12660.1"/>
    <property type="match status" value="1"/>
</dbReference>
<dbReference type="PANTHER" id="PTHR34583">
    <property type="entry name" value="ANTIPORTER SUBUNIT MNHC2-RELATED"/>
    <property type="match status" value="1"/>
</dbReference>
<dbReference type="PANTHER" id="PTHR34583:SF2">
    <property type="entry name" value="ANTIPORTER SUBUNIT MNHC2-RELATED"/>
    <property type="match status" value="1"/>
</dbReference>
<dbReference type="Pfam" id="PF00420">
    <property type="entry name" value="Oxidored_q2"/>
    <property type="match status" value="1"/>
</dbReference>
<evidence type="ECO:0000250" key="1"/>
<evidence type="ECO:0000255" key="2"/>
<evidence type="ECO:0000305" key="3"/>
<gene>
    <name type="primary">mnhC1</name>
    <name type="ordered locus">SAV0950</name>
</gene>